<keyword id="KW-0025">Alternative splicing</keyword>
<keyword id="KW-0067">ATP-binding</keyword>
<keyword id="KW-0106">Calcium</keyword>
<keyword id="KW-0109">Calcium transport</keyword>
<keyword id="KW-0112">Calmodulin-binding</keyword>
<keyword id="KW-1003">Cell membrane</keyword>
<keyword id="KW-0325">Glycoprotein</keyword>
<keyword id="KW-0406">Ion transport</keyword>
<keyword id="KW-0460">Magnesium</keyword>
<keyword id="KW-0472">Membrane</keyword>
<keyword id="KW-0479">Metal-binding</keyword>
<keyword id="KW-0547">Nucleotide-binding</keyword>
<keyword id="KW-1185">Reference proteome</keyword>
<keyword id="KW-1278">Translocase</keyword>
<keyword id="KW-0812">Transmembrane</keyword>
<keyword id="KW-1133">Transmembrane helix</keyword>
<keyword id="KW-0813">Transport</keyword>
<comment type="function">
    <text evidence="10">Catalyzes the hydrolysis of ATP coupled with the transport of calcium across a membrane.</text>
</comment>
<comment type="catalytic activity">
    <reaction evidence="8">
        <text>Ca(2+)(in) + ATP + H2O = Ca(2+)(out) + ADP + phosphate + H(+)</text>
        <dbReference type="Rhea" id="RHEA:18105"/>
        <dbReference type="ChEBI" id="CHEBI:15377"/>
        <dbReference type="ChEBI" id="CHEBI:15378"/>
        <dbReference type="ChEBI" id="CHEBI:29108"/>
        <dbReference type="ChEBI" id="CHEBI:30616"/>
        <dbReference type="ChEBI" id="CHEBI:43474"/>
        <dbReference type="ChEBI" id="CHEBI:456216"/>
        <dbReference type="EC" id="7.2.2.10"/>
    </reaction>
</comment>
<comment type="subunit">
    <text evidence="10">Interacts with calmodulin.</text>
</comment>
<comment type="subcellular location">
    <subcellularLocation>
        <location evidence="5">Cell membrane</location>
        <topology evidence="8">Multi-pass membrane protein</topology>
    </subcellularLocation>
</comment>
<comment type="alternative products">
    <event type="alternative splicing"/>
    <isoform>
        <id>G5EFR6-1</id>
        <name evidence="16">a</name>
        <sequence type="displayed"/>
    </isoform>
    <isoform>
        <id>G5EFR6-2</id>
        <name evidence="17">b</name>
        <sequence type="described" ref="VSP_061936"/>
    </isoform>
    <isoform>
        <id>G5EFR6-3</id>
        <name evidence="18">c</name>
        <sequence type="described" ref="VSP_061937"/>
    </isoform>
    <isoform>
        <id>G5EFR6-4</id>
        <name evidence="19">d</name>
        <sequence type="described" ref="VSP_061935"/>
    </isoform>
</comment>
<comment type="similarity">
    <text evidence="11">Belongs to the cation transport ATPase (P-type) (TC 3.A.3) family. Type IIB subfamily.</text>
</comment>
<feature type="chain" id="PRO_0000458255" description="Plasma membrane calcium-transporting ATPase mca-1">
    <location>
        <begin position="1"/>
        <end position="1252"/>
    </location>
</feature>
<feature type="topological domain" description="Cytoplasmic" evidence="11">
    <location>
        <begin position="1"/>
        <end position="121"/>
    </location>
</feature>
<feature type="transmembrane region" description="Helical" evidence="6">
    <location>
        <begin position="122"/>
        <end position="142"/>
    </location>
</feature>
<feature type="topological domain" description="Extracellular" evidence="11">
    <location>
        <begin position="143"/>
        <end position="180"/>
    </location>
</feature>
<feature type="transmembrane region" description="Helical" evidence="6">
    <location>
        <begin position="181"/>
        <end position="201"/>
    </location>
</feature>
<feature type="topological domain" description="Cytoplasmic" evidence="11">
    <location>
        <begin position="202"/>
        <end position="376"/>
    </location>
</feature>
<feature type="transmembrane region" description="Helical" evidence="6">
    <location>
        <begin position="377"/>
        <end position="397"/>
    </location>
</feature>
<feature type="topological domain" description="Extracellular" evidence="11">
    <location>
        <begin position="398"/>
        <end position="422"/>
    </location>
</feature>
<feature type="transmembrane region" description="Helical" evidence="6">
    <location>
        <begin position="423"/>
        <end position="443"/>
    </location>
</feature>
<feature type="topological domain" description="Cytoplasmic" evidence="11">
    <location>
        <begin position="444"/>
        <end position="879"/>
    </location>
</feature>
<feature type="transmembrane region" description="Helical" evidence="6">
    <location>
        <begin position="880"/>
        <end position="900"/>
    </location>
</feature>
<feature type="topological domain" description="Extracellular" evidence="11">
    <location>
        <begin position="901"/>
        <end position="908"/>
    </location>
</feature>
<feature type="transmembrane region" description="Helical" evidence="6">
    <location>
        <begin position="909"/>
        <end position="929"/>
    </location>
</feature>
<feature type="topological domain" description="Cytoplasmic" evidence="11">
    <location>
        <begin position="930"/>
        <end position="960"/>
    </location>
</feature>
<feature type="transmembrane region" description="Helical" evidence="6">
    <location>
        <begin position="961"/>
        <end position="981"/>
    </location>
</feature>
<feature type="topological domain" description="Extracellular" evidence="11">
    <location>
        <begin position="982"/>
        <end position="989"/>
    </location>
</feature>
<feature type="transmembrane region" description="Helical" evidence="6">
    <location>
        <begin position="990"/>
        <end position="1010"/>
    </location>
</feature>
<feature type="topological domain" description="Cytoplasmic" evidence="11">
    <location>
        <begin position="1011"/>
        <end position="1035"/>
    </location>
</feature>
<feature type="transmembrane region" description="Helical" evidence="6">
    <location>
        <begin position="1036"/>
        <end position="1056"/>
    </location>
</feature>
<feature type="topological domain" description="Extracellular" evidence="11">
    <location>
        <begin position="1057"/>
        <end position="1065"/>
    </location>
</feature>
<feature type="transmembrane region" description="Helical" evidence="6">
    <location>
        <begin position="1066"/>
        <end position="1086"/>
    </location>
</feature>
<feature type="topological domain" description="Cytoplasmic" evidence="11">
    <location>
        <begin position="1087"/>
        <end position="1252"/>
    </location>
</feature>
<feature type="region of interest" description="Disordered" evidence="9">
    <location>
        <begin position="330"/>
        <end position="361"/>
    </location>
</feature>
<feature type="region of interest" description="Calmodulin-binding subdomain A" evidence="5">
    <location>
        <begin position="1124"/>
        <end position="1142"/>
    </location>
</feature>
<feature type="region of interest" description="Calmodulin-binding subdomain B" evidence="4">
    <location>
        <begin position="1143"/>
        <end position="1152"/>
    </location>
</feature>
<feature type="region of interest" description="Disordered" evidence="9">
    <location>
        <begin position="1181"/>
        <end position="1252"/>
    </location>
</feature>
<feature type="compositionally biased region" description="Low complexity" evidence="9">
    <location>
        <begin position="333"/>
        <end position="357"/>
    </location>
</feature>
<feature type="active site" description="4-aspartylphosphate intermediate" evidence="3">
    <location>
        <position position="479"/>
    </location>
</feature>
<feature type="binding site" evidence="2">
    <location>
        <position position="432"/>
    </location>
    <ligand>
        <name>Ca(2+)</name>
        <dbReference type="ChEBI" id="CHEBI:29108"/>
        <label>1</label>
    </ligand>
</feature>
<feature type="binding site" evidence="2">
    <location>
        <position position="435"/>
    </location>
    <ligand>
        <name>Ca(2+)</name>
        <dbReference type="ChEBI" id="CHEBI:29108"/>
        <label>1</label>
    </ligand>
</feature>
<feature type="binding site" evidence="2">
    <location>
        <position position="437"/>
    </location>
    <ligand>
        <name>Ca(2+)</name>
        <dbReference type="ChEBI" id="CHEBI:29108"/>
        <label>1</label>
    </ligand>
</feature>
<feature type="binding site" evidence="2">
    <location>
        <position position="479"/>
    </location>
    <ligand>
        <name>Mg(2+)</name>
        <dbReference type="ChEBI" id="CHEBI:18420"/>
    </ligand>
</feature>
<feature type="binding site" evidence="2">
    <location>
        <position position="481"/>
    </location>
    <ligand>
        <name>ATP</name>
        <dbReference type="ChEBI" id="CHEBI:30616"/>
    </ligand>
</feature>
<feature type="binding site" evidence="2">
    <location>
        <position position="481"/>
    </location>
    <ligand>
        <name>Mg(2+)</name>
        <dbReference type="ChEBI" id="CHEBI:18420"/>
    </ligand>
</feature>
<feature type="binding site" evidence="2">
    <location>
        <position position="553"/>
    </location>
    <ligand>
        <name>ATP</name>
        <dbReference type="ChEBI" id="CHEBI:30616"/>
    </ligand>
</feature>
<feature type="binding site" evidence="2">
    <location>
        <position position="612"/>
    </location>
    <ligand>
        <name>ATP</name>
        <dbReference type="ChEBI" id="CHEBI:30616"/>
    </ligand>
</feature>
<feature type="binding site" evidence="1">
    <location>
        <position position="733"/>
    </location>
    <ligand>
        <name>ATP</name>
        <dbReference type="ChEBI" id="CHEBI:30616"/>
    </ligand>
</feature>
<feature type="binding site" evidence="1">
    <location>
        <position position="734"/>
    </location>
    <ligand>
        <name>ATP</name>
        <dbReference type="ChEBI" id="CHEBI:30616"/>
    </ligand>
</feature>
<feature type="binding site" evidence="2">
    <location>
        <position position="735"/>
    </location>
    <ligand>
        <name>ATP</name>
        <dbReference type="ChEBI" id="CHEBI:30616"/>
    </ligand>
</feature>
<feature type="binding site" evidence="2">
    <location>
        <position position="792"/>
    </location>
    <ligand>
        <name>ATP</name>
        <dbReference type="ChEBI" id="CHEBI:30616"/>
    </ligand>
</feature>
<feature type="binding site" evidence="1">
    <location>
        <position position="798"/>
    </location>
    <ligand>
        <name>ATP</name>
        <dbReference type="ChEBI" id="CHEBI:30616"/>
    </ligand>
</feature>
<feature type="binding site" evidence="2">
    <location>
        <position position="822"/>
    </location>
    <ligand>
        <name>Mg(2+)</name>
        <dbReference type="ChEBI" id="CHEBI:18420"/>
    </ligand>
</feature>
<feature type="binding site" evidence="2">
    <location>
        <position position="825"/>
    </location>
    <ligand>
        <name>ATP</name>
        <dbReference type="ChEBI" id="CHEBI:30616"/>
    </ligand>
</feature>
<feature type="binding site" evidence="2">
    <location>
        <position position="888"/>
    </location>
    <ligand>
        <name>Ca(2+)</name>
        <dbReference type="ChEBI" id="CHEBI:29108"/>
        <label>2</label>
    </ligand>
</feature>
<feature type="binding site" evidence="2">
    <location>
        <position position="916"/>
    </location>
    <ligand>
        <name>Ca(2+)</name>
        <dbReference type="ChEBI" id="CHEBI:29108"/>
        <label>1</label>
    </ligand>
</feature>
<feature type="binding site" evidence="2">
    <location>
        <position position="920"/>
    </location>
    <ligand>
        <name>Ca(2+)</name>
        <dbReference type="ChEBI" id="CHEBI:29108"/>
        <label>1</label>
    </ligand>
</feature>
<feature type="binding site" evidence="2">
    <location>
        <position position="920"/>
    </location>
    <ligand>
        <name>Ca(2+)</name>
        <dbReference type="ChEBI" id="CHEBI:29108"/>
        <label>2</label>
    </ligand>
</feature>
<feature type="glycosylation site" description="N-linked (GlcNAc...) asparagine" evidence="7">
    <location>
        <position position="155"/>
    </location>
</feature>
<feature type="glycosylation site" description="N-linked (GlcNAc...) asparagine" evidence="7">
    <location>
        <position position="164"/>
    </location>
</feature>
<feature type="splice variant" id="VSP_061935" description="In isoform d.">
    <location>
        <begin position="1"/>
        <end position="167"/>
    </location>
</feature>
<feature type="splice variant" id="VSP_061936" description="In isoform b.">
    <original>MQKSQNVTAVTETNGVAAALGGHHTSPDTNAGKTK</original>
    <variation>MRLRRGHTYDE</variation>
    <location>
        <begin position="1"/>
        <end position="35"/>
    </location>
</feature>
<feature type="splice variant" id="VSP_061937" description="In isoform c.">
    <original>MQKSQNVTAVTETNGVAAALGGHHTSPDTNAGKT</original>
    <variation>MPIIAIILVVCFIGRLIVYFWKREPKGENGK</variation>
    <location>
        <begin position="1"/>
        <end position="34"/>
    </location>
</feature>
<gene>
    <name evidence="16" type="primary">mca-1</name>
    <name evidence="16" type="ORF">W09C2.3</name>
</gene>
<protein>
    <recommendedName>
        <fullName evidence="11">Plasma membrane calcium-transporting ATPase mca-1</fullName>
        <ecNumber evidence="8">7.2.2.10</ecNumber>
    </recommendedName>
    <alternativeName>
        <fullName evidence="16">Membrane calcium ATPase-1</fullName>
    </alternativeName>
</protein>
<organism evidence="12">
    <name type="scientific">Caenorhabditis elegans</name>
    <dbReference type="NCBI Taxonomy" id="6239"/>
    <lineage>
        <taxon>Eukaryota</taxon>
        <taxon>Metazoa</taxon>
        <taxon>Ecdysozoa</taxon>
        <taxon>Nematoda</taxon>
        <taxon>Chromadorea</taxon>
        <taxon>Rhabditida</taxon>
        <taxon>Rhabditina</taxon>
        <taxon>Rhabditomorpha</taxon>
        <taxon>Rhabditoidea</taxon>
        <taxon>Rhabditidae</taxon>
        <taxon>Peloderinae</taxon>
        <taxon>Caenorhabditis</taxon>
    </lineage>
</organism>
<accession>G5EFR6</accession>
<accession>F5GU98</accession>
<accession>G5EC04</accession>
<accession>G5EC39</accession>
<dbReference type="EC" id="7.2.2.10" evidence="8"/>
<dbReference type="EMBL" id="AJ223616">
    <property type="protein sequence ID" value="CAA11491.1"/>
    <property type="molecule type" value="mRNA"/>
</dbReference>
<dbReference type="EMBL" id="BX284604">
    <property type="protein sequence ID" value="CAA92495.1"/>
    <property type="molecule type" value="Genomic_DNA"/>
</dbReference>
<dbReference type="EMBL" id="BX284604">
    <property type="protein sequence ID" value="CAB61039.2"/>
    <property type="molecule type" value="Genomic_DNA"/>
</dbReference>
<dbReference type="EMBL" id="BX284604">
    <property type="protein sequence ID" value="CAD59229.1"/>
    <property type="molecule type" value="Genomic_DNA"/>
</dbReference>
<dbReference type="EMBL" id="BX284604">
    <property type="protein sequence ID" value="CCA65637.1"/>
    <property type="molecule type" value="Genomic_DNA"/>
</dbReference>
<dbReference type="EMBL" id="AY438644">
    <property type="protein sequence ID" value="AAR00671.1"/>
    <property type="molecule type" value="mRNA"/>
</dbReference>
<dbReference type="EMBL" id="AY438645">
    <property type="protein sequence ID" value="AAR00672.1"/>
    <property type="molecule type" value="mRNA"/>
</dbReference>
<dbReference type="RefSeq" id="NP_001023426.1">
    <molecule id="G5EFR6-2"/>
    <property type="nucleotide sequence ID" value="NM_001028255.5"/>
</dbReference>
<dbReference type="RefSeq" id="NP_001023427.1">
    <molecule id="G5EFR6-3"/>
    <property type="nucleotide sequence ID" value="NM_001028256.7"/>
</dbReference>
<dbReference type="RefSeq" id="NP_001255409.1">
    <molecule id="G5EFR6-4"/>
    <property type="nucleotide sequence ID" value="NM_001268480.3"/>
</dbReference>
<dbReference type="RefSeq" id="NP_501709.2">
    <molecule id="G5EFR6-1"/>
    <property type="nucleotide sequence ID" value="NM_069308.6"/>
</dbReference>
<dbReference type="SMR" id="G5EFR6"/>
<dbReference type="FunCoup" id="G5EFR6">
    <property type="interactions" value="229"/>
</dbReference>
<dbReference type="STRING" id="6239.W09C2.3a.1"/>
<dbReference type="PaxDb" id="6239-W09C2.3a"/>
<dbReference type="PeptideAtlas" id="G5EFR6"/>
<dbReference type="EnsemblMetazoa" id="W09C2.3a.1">
    <molecule id="G5EFR6-1"/>
    <property type="protein sequence ID" value="W09C2.3a.1"/>
    <property type="gene ID" value="WBGene00003151"/>
</dbReference>
<dbReference type="EnsemblMetazoa" id="W09C2.3b.1">
    <molecule id="G5EFR6-2"/>
    <property type="protein sequence ID" value="W09C2.3b.1"/>
    <property type="gene ID" value="WBGene00003151"/>
</dbReference>
<dbReference type="EnsemblMetazoa" id="W09C2.3c.1">
    <molecule id="G5EFR6-3"/>
    <property type="protein sequence ID" value="W09C2.3c.1"/>
    <property type="gene ID" value="WBGene00003151"/>
</dbReference>
<dbReference type="EnsemblMetazoa" id="W09C2.3d.1">
    <molecule id="G5EFR6-4"/>
    <property type="protein sequence ID" value="W09C2.3d.1"/>
    <property type="gene ID" value="WBGene00003151"/>
</dbReference>
<dbReference type="GeneID" id="177795"/>
<dbReference type="KEGG" id="cel:CELE_W09C2.3"/>
<dbReference type="AGR" id="WB:WBGene00003151"/>
<dbReference type="CTD" id="177795"/>
<dbReference type="WormBase" id="W09C2.3a">
    <molecule id="G5EFR6-1"/>
    <property type="protein sequence ID" value="CE32951"/>
    <property type="gene ID" value="WBGene00003151"/>
    <property type="gene designation" value="mca-1"/>
</dbReference>
<dbReference type="WormBase" id="W09C2.3b">
    <molecule id="G5EFR6-2"/>
    <property type="protein sequence ID" value="CE25154"/>
    <property type="gene ID" value="WBGene00003151"/>
    <property type="gene designation" value="mca-1"/>
</dbReference>
<dbReference type="WormBase" id="W09C2.3c">
    <molecule id="G5EFR6-3"/>
    <property type="protein sequence ID" value="CE03800"/>
    <property type="gene ID" value="WBGene00003151"/>
    <property type="gene designation" value="mca-1"/>
</dbReference>
<dbReference type="WormBase" id="W09C2.3d">
    <molecule id="G5EFR6-4"/>
    <property type="protein sequence ID" value="CE45969"/>
    <property type="gene ID" value="WBGene00003151"/>
    <property type="gene designation" value="mca-1"/>
</dbReference>
<dbReference type="eggNOG" id="KOG0204">
    <property type="taxonomic scope" value="Eukaryota"/>
</dbReference>
<dbReference type="HOGENOM" id="CLU_002360_9_0_1"/>
<dbReference type="InParanoid" id="G5EFR6"/>
<dbReference type="OMA" id="RRSVVFN"/>
<dbReference type="OrthoDB" id="116380at2759"/>
<dbReference type="Reactome" id="R-CEL-418359">
    <property type="pathway name" value="Reduction of cytosolic Ca++ levels"/>
</dbReference>
<dbReference type="Reactome" id="R-CEL-5578775">
    <property type="pathway name" value="Ion homeostasis"/>
</dbReference>
<dbReference type="Reactome" id="R-CEL-936837">
    <property type="pathway name" value="Ion transport by P-type ATPases"/>
</dbReference>
<dbReference type="PRO" id="PR:G5EFR6"/>
<dbReference type="Proteomes" id="UP000001940">
    <property type="component" value="Chromosome IV"/>
</dbReference>
<dbReference type="Bgee" id="WBGene00003151">
    <property type="expression patterns" value="Expressed in larva and 4 other cell types or tissues"/>
</dbReference>
<dbReference type="ExpressionAtlas" id="G5EFR6">
    <property type="expression patterns" value="baseline and differential"/>
</dbReference>
<dbReference type="GO" id="GO:0043231">
    <property type="term" value="C:intracellular membrane-bounded organelle"/>
    <property type="evidence" value="ECO:0000318"/>
    <property type="project" value="GO_Central"/>
</dbReference>
<dbReference type="GO" id="GO:0016020">
    <property type="term" value="C:membrane"/>
    <property type="evidence" value="ECO:0000314"/>
    <property type="project" value="WormBase"/>
</dbReference>
<dbReference type="GO" id="GO:0005886">
    <property type="term" value="C:plasma membrane"/>
    <property type="evidence" value="ECO:0000318"/>
    <property type="project" value="GO_Central"/>
</dbReference>
<dbReference type="GO" id="GO:0005524">
    <property type="term" value="F:ATP binding"/>
    <property type="evidence" value="ECO:0007669"/>
    <property type="project" value="UniProtKB-KW"/>
</dbReference>
<dbReference type="GO" id="GO:0016887">
    <property type="term" value="F:ATP hydrolysis activity"/>
    <property type="evidence" value="ECO:0007669"/>
    <property type="project" value="InterPro"/>
</dbReference>
<dbReference type="GO" id="GO:0005516">
    <property type="term" value="F:calmodulin binding"/>
    <property type="evidence" value="ECO:0000314"/>
    <property type="project" value="WormBase"/>
</dbReference>
<dbReference type="GO" id="GO:0046872">
    <property type="term" value="F:metal ion binding"/>
    <property type="evidence" value="ECO:0007669"/>
    <property type="project" value="UniProtKB-KW"/>
</dbReference>
<dbReference type="GO" id="GO:0005388">
    <property type="term" value="F:P-type calcium transporter activity"/>
    <property type="evidence" value="ECO:0000314"/>
    <property type="project" value="WormBase"/>
</dbReference>
<dbReference type="GO" id="GO:0006816">
    <property type="term" value="P:calcium ion transport"/>
    <property type="evidence" value="ECO:0000314"/>
    <property type="project" value="WormBase"/>
</dbReference>
<dbReference type="GO" id="GO:0006874">
    <property type="term" value="P:intracellular calcium ion homeostasis"/>
    <property type="evidence" value="ECO:0000314"/>
    <property type="project" value="WormBase"/>
</dbReference>
<dbReference type="GO" id="GO:0051480">
    <property type="term" value="P:regulation of cytosolic calcium ion concentration"/>
    <property type="evidence" value="ECO:0000318"/>
    <property type="project" value="GO_Central"/>
</dbReference>
<dbReference type="CDD" id="cd02081">
    <property type="entry name" value="P-type_ATPase_Ca_PMCA-like"/>
    <property type="match status" value="1"/>
</dbReference>
<dbReference type="FunFam" id="1.20.1110.10:FF:000001">
    <property type="entry name" value="Calcium-transporting ATPase"/>
    <property type="match status" value="1"/>
</dbReference>
<dbReference type="FunFam" id="1.20.1110.10:FF:000002">
    <property type="entry name" value="Calcium-transporting ATPase"/>
    <property type="match status" value="1"/>
</dbReference>
<dbReference type="FunFam" id="1.20.1110.10:FF:000033">
    <property type="entry name" value="Calcium-transporting ATPase"/>
    <property type="match status" value="1"/>
</dbReference>
<dbReference type="FunFam" id="2.70.150.10:FF:000001">
    <property type="entry name" value="Calcium-transporting ATPase"/>
    <property type="match status" value="1"/>
</dbReference>
<dbReference type="FunFam" id="3.40.1110.10:FF:000060">
    <property type="entry name" value="Calcium-transporting ATPase"/>
    <property type="match status" value="1"/>
</dbReference>
<dbReference type="Gene3D" id="3.40.1110.10">
    <property type="entry name" value="Calcium-transporting ATPase, cytoplasmic domain N"/>
    <property type="match status" value="1"/>
</dbReference>
<dbReference type="Gene3D" id="2.70.150.10">
    <property type="entry name" value="Calcium-transporting ATPase, cytoplasmic transduction domain A"/>
    <property type="match status" value="1"/>
</dbReference>
<dbReference type="Gene3D" id="1.20.1110.10">
    <property type="entry name" value="Calcium-transporting ATPase, transmembrane domain"/>
    <property type="match status" value="1"/>
</dbReference>
<dbReference type="Gene3D" id="3.40.50.1000">
    <property type="entry name" value="HAD superfamily/HAD-like"/>
    <property type="match status" value="1"/>
</dbReference>
<dbReference type="InterPro" id="IPR006068">
    <property type="entry name" value="ATPase_P-typ_cation-transptr_C"/>
</dbReference>
<dbReference type="InterPro" id="IPR004014">
    <property type="entry name" value="ATPase_P-typ_cation-transptr_N"/>
</dbReference>
<dbReference type="InterPro" id="IPR023299">
    <property type="entry name" value="ATPase_P-typ_cyto_dom_N"/>
</dbReference>
<dbReference type="InterPro" id="IPR018303">
    <property type="entry name" value="ATPase_P-typ_P_site"/>
</dbReference>
<dbReference type="InterPro" id="IPR023298">
    <property type="entry name" value="ATPase_P-typ_TM_dom_sf"/>
</dbReference>
<dbReference type="InterPro" id="IPR008250">
    <property type="entry name" value="ATPase_P-typ_transduc_dom_A_sf"/>
</dbReference>
<dbReference type="InterPro" id="IPR036412">
    <property type="entry name" value="HAD-like_sf"/>
</dbReference>
<dbReference type="InterPro" id="IPR023214">
    <property type="entry name" value="HAD_sf"/>
</dbReference>
<dbReference type="InterPro" id="IPR006408">
    <property type="entry name" value="P-type_ATPase_IIB"/>
</dbReference>
<dbReference type="InterPro" id="IPR001757">
    <property type="entry name" value="P_typ_ATPase"/>
</dbReference>
<dbReference type="InterPro" id="IPR044492">
    <property type="entry name" value="P_typ_ATPase_HD_dom"/>
</dbReference>
<dbReference type="NCBIfam" id="TIGR01517">
    <property type="entry name" value="ATPase-IIB_Ca"/>
    <property type="match status" value="1"/>
</dbReference>
<dbReference type="NCBIfam" id="TIGR01494">
    <property type="entry name" value="ATPase_P-type"/>
    <property type="match status" value="3"/>
</dbReference>
<dbReference type="PANTHER" id="PTHR24093">
    <property type="entry name" value="CATION TRANSPORTING ATPASE"/>
    <property type="match status" value="1"/>
</dbReference>
<dbReference type="PANTHER" id="PTHR24093:SF253">
    <property type="entry name" value="PLASMA MEMBRANE CALCIUM-TRANSPORTING ATPASE MCA-1"/>
    <property type="match status" value="1"/>
</dbReference>
<dbReference type="Pfam" id="PF13246">
    <property type="entry name" value="Cation_ATPase"/>
    <property type="match status" value="1"/>
</dbReference>
<dbReference type="Pfam" id="PF00689">
    <property type="entry name" value="Cation_ATPase_C"/>
    <property type="match status" value="1"/>
</dbReference>
<dbReference type="Pfam" id="PF00690">
    <property type="entry name" value="Cation_ATPase_N"/>
    <property type="match status" value="1"/>
</dbReference>
<dbReference type="Pfam" id="PF00122">
    <property type="entry name" value="E1-E2_ATPase"/>
    <property type="match status" value="2"/>
</dbReference>
<dbReference type="Pfam" id="PF08282">
    <property type="entry name" value="Hydrolase_3"/>
    <property type="match status" value="1"/>
</dbReference>
<dbReference type="PRINTS" id="PR00119">
    <property type="entry name" value="CATATPASE"/>
</dbReference>
<dbReference type="SFLD" id="SFLDS00003">
    <property type="entry name" value="Haloacid_Dehalogenase"/>
    <property type="match status" value="1"/>
</dbReference>
<dbReference type="SFLD" id="SFLDF00027">
    <property type="entry name" value="p-type_atpase"/>
    <property type="match status" value="1"/>
</dbReference>
<dbReference type="SMART" id="SM00831">
    <property type="entry name" value="Cation_ATPase_N"/>
    <property type="match status" value="1"/>
</dbReference>
<dbReference type="SUPFAM" id="SSF81653">
    <property type="entry name" value="Calcium ATPase, transduction domain A"/>
    <property type="match status" value="1"/>
</dbReference>
<dbReference type="SUPFAM" id="SSF81665">
    <property type="entry name" value="Calcium ATPase, transmembrane domain M"/>
    <property type="match status" value="1"/>
</dbReference>
<dbReference type="SUPFAM" id="SSF56784">
    <property type="entry name" value="HAD-like"/>
    <property type="match status" value="1"/>
</dbReference>
<dbReference type="SUPFAM" id="SSF81660">
    <property type="entry name" value="Metal cation-transporting ATPase, ATP-binding domain N"/>
    <property type="match status" value="1"/>
</dbReference>
<dbReference type="PROSITE" id="PS00154">
    <property type="entry name" value="ATPASE_E1_E2"/>
    <property type="match status" value="1"/>
</dbReference>
<reference evidence="13" key="1">
    <citation type="journal article" date="1999" name="J. Biol. Chem.">
        <title>Identification and functional expression of the plasma membrane calcium ATPase gene family from Caenorhabditis elegans.</title>
        <authorList>
            <person name="Kraev A."/>
            <person name="Kraev N."/>
            <person name="Carafoli E."/>
        </authorList>
    </citation>
    <scope>NUCLEOTIDE SEQUENCE [MRNA] (ISOFORM B)</scope>
    <scope>FUNCTION</scope>
    <scope>INTERACTION WITH CALMODULIN</scope>
    <source>
        <strain evidence="13">CB1489 him-8</strain>
    </source>
</reference>
<reference evidence="14 15" key="2">
    <citation type="journal article" date="1998" name="Science">
        <title>Genome sequence of the nematode C. elegans: a platform for investigating biology.</title>
        <authorList>
            <consortium name="The C. elegans sequencing consortium"/>
        </authorList>
    </citation>
    <scope>NUCLEOTIDE SEQUENCE [LARGE SCALE GENOMIC DNA]</scope>
    <source>
        <strain evidence="15">Bristol N2</strain>
    </source>
</reference>
<reference evidence="12" key="3">
    <citation type="submission" date="2003-10" db="EMBL/GenBank/DDBJ databases">
        <title>The Caenorhabditis elegans transcriptome project, a complementary view of the genome.</title>
        <authorList>
            <person name="Kohara Y."/>
            <person name="Shin-i T."/>
            <person name="Suzuki Y."/>
            <person name="Sugano S."/>
            <person name="Thierry-Mieg D."/>
            <person name="Thierry-Mieg J."/>
        </authorList>
    </citation>
    <scope>NUCLEOTIDE SEQUENCE [LARGE SCALE MRNA] (ISOFORMS A AND C)</scope>
</reference>
<evidence type="ECO:0000250" key="1">
    <source>
        <dbReference type="UniProtKB" id="P04191"/>
    </source>
</evidence>
<evidence type="ECO:0000250" key="2">
    <source>
        <dbReference type="UniProtKB" id="P11607"/>
    </source>
</evidence>
<evidence type="ECO:0000250" key="3">
    <source>
        <dbReference type="UniProtKB" id="P19156"/>
    </source>
</evidence>
<evidence type="ECO:0000250" key="4">
    <source>
        <dbReference type="UniProtKB" id="P20020"/>
    </source>
</evidence>
<evidence type="ECO:0000250" key="5">
    <source>
        <dbReference type="UniProtKB" id="P23634"/>
    </source>
</evidence>
<evidence type="ECO:0000255" key="6"/>
<evidence type="ECO:0000255" key="7">
    <source>
        <dbReference type="PROSITE-ProRule" id="PRU00498"/>
    </source>
</evidence>
<evidence type="ECO:0000255" key="8">
    <source>
        <dbReference type="RuleBase" id="RU361146"/>
    </source>
</evidence>
<evidence type="ECO:0000256" key="9">
    <source>
        <dbReference type="SAM" id="MobiDB-lite"/>
    </source>
</evidence>
<evidence type="ECO:0000269" key="10">
    <source>
    </source>
</evidence>
<evidence type="ECO:0000305" key="11"/>
<evidence type="ECO:0000312" key="12">
    <source>
        <dbReference type="EMBL" id="AAR00671.1"/>
    </source>
</evidence>
<evidence type="ECO:0000312" key="13">
    <source>
        <dbReference type="EMBL" id="CAA11491.1"/>
    </source>
</evidence>
<evidence type="ECO:0000312" key="14">
    <source>
        <dbReference type="EMBL" id="CAB61039.2"/>
    </source>
</evidence>
<evidence type="ECO:0000312" key="15">
    <source>
        <dbReference type="Proteomes" id="UP000001940"/>
    </source>
</evidence>
<evidence type="ECO:0000312" key="16">
    <source>
        <dbReference type="WormBase" id="W09C2.3a"/>
    </source>
</evidence>
<evidence type="ECO:0000312" key="17">
    <source>
        <dbReference type="WormBase" id="W09C2.3b"/>
    </source>
</evidence>
<evidence type="ECO:0000312" key="18">
    <source>
        <dbReference type="WormBase" id="W09C2.3c"/>
    </source>
</evidence>
<evidence type="ECO:0000312" key="19">
    <source>
        <dbReference type="WormBase" id="W09C2.3d"/>
    </source>
</evidence>
<name>MCA1_CAEEL</name>
<sequence length="1252" mass="136642">MQKSQNVTAVTETNGVAAALGGHHTSPDTNAGKTKDAKEFGCSLGDLRGLMEARGAEAIVRLSTEHEGVEGLCKKLKTDSLVGLNGEQADLDRRRHVYGANTIPPAKSKGFVRLVLDACKDPTLVILVLSGFINLALSFYEPTSAAEDATQHLVNATTAAILANGTFMSTTEAPSEGHGTAWIEGVAILLCVIVVVLVTAVNDYSKERQFRSLQEKIETGQKFSVIRNGEAIDVPVSDLVVGDIARVKYGDLLPADGFLIQSNDLKIDESSLTGESDHIKKSIESDPVLLSGTYAMEGSGKMLITAVGVNSQTGIIMTLLGAGKAGIGDDDSTSTSSSSSSSSSSSGSSSNGSSDSSKSGDDDLTAKSVLQAKLSKLALQIIYCGTTIAIIALIVLVTRFCLDHYVFEKNEFSLVDIQMFVKFFIIAVTILVISIPEGLPLAIALALTYSVRKMMHDNNLVRHLDACETMGNATSICSDKTGTLTTNRMTVVQSYINGNHYTSQEAQPHGANLPGSTGPILMEAISVNCAYNSMIVEPTKAGEQIQQLGNKTECGLLGFVNRLGGDYAAIRKKFPEHDLTKVYTFNSSRKCMMTVVPYAENGQNIGYRVYCKGASEIVLGRCTYLIGSDGKPHQLTGDRLKEITSTIIHEMANSGLRTICVAYKTIIKKGTRDVEKTEIEFAEDSDIDWDDEDAMYQNFTGIAICGIQDPVRPEVPVAISKCKKAGITVRMVTGDNIMTARAIAMSCKILEPGEDFLALEGKEFNERIRDENGKVSQAKLDEIWPRLRVLARAQPADKYTLVKGIIDSKATPQREIVAVTGDGTNDGPALKKADVGFAMGIAGTDVAKEASDIILTDDNFTSIVKAVMWGRNVYDSISKFLQFQLTVNVVAVITAFVGAVTVSDSPLKAVHMLWINLIMDTLASLALATEQPTDELLERKPYGRKKSLISRTMVKNILCHALYQLIIIFVIFFYGDTIFGIKTGLYAPLFAPPSQHFTLVFNAFVMMTVFNEINARKVHGERNVFKGLASNRVFCVIWVTTFIAQIIIVQFGGAWFSTAPLTLQQWIVCLVLGFSTLIWGQIVATIPSKKLPKAWKVGKGEVQPANLHINGDYNVRARSRAVTLRRSGKSLWVRGMFIIGNHLRVLRAFGMEKSEKAAFGRTAPAMTAEAAERWRASYRKYRHQKHQEKKATAETAESVKSADWAKEQKEKKKTFKQIKQVARGKSLDKDSKKHHKKRKDQTNVDMEDIELN</sequence>
<proteinExistence type="evidence at protein level"/>